<accession>B9EKI3</accession>
<accession>E9QPJ3</accession>
<accession>Q3UMH8</accession>
<accession>Q3UMR3</accession>
<keyword id="KW-0175">Coiled coil</keyword>
<keyword id="KW-0963">Cytoplasm</keyword>
<keyword id="KW-0238">DNA-binding</keyword>
<keyword id="KW-0333">Golgi apparatus</keyword>
<keyword id="KW-0472">Membrane</keyword>
<keyword id="KW-0539">Nucleus</keyword>
<keyword id="KW-0597">Phosphoprotein</keyword>
<keyword id="KW-1185">Reference proteome</keyword>
<keyword id="KW-0678">Repressor</keyword>
<keyword id="KW-0804">Transcription</keyword>
<keyword id="KW-0805">Transcription regulation</keyword>
<protein>
    <recommendedName>
        <fullName>TATA element modulatory factor</fullName>
        <shortName>TMF</shortName>
    </recommendedName>
    <alternativeName>
        <fullName>Androgen receptor coactivator 160 kDa protein</fullName>
    </alternativeName>
    <alternativeName>
        <fullName>Androgen receptor-associated protein of 160 kDa</fullName>
    </alternativeName>
</protein>
<reference key="1">
    <citation type="journal article" date="2009" name="PLoS Biol.">
        <title>Lineage-specific biology revealed by a finished genome assembly of the mouse.</title>
        <authorList>
            <person name="Church D.M."/>
            <person name="Goodstadt L."/>
            <person name="Hillier L.W."/>
            <person name="Zody M.C."/>
            <person name="Goldstein S."/>
            <person name="She X."/>
            <person name="Bult C.J."/>
            <person name="Agarwala R."/>
            <person name="Cherry J.L."/>
            <person name="DiCuccio M."/>
            <person name="Hlavina W."/>
            <person name="Kapustin Y."/>
            <person name="Meric P."/>
            <person name="Maglott D."/>
            <person name="Birtle Z."/>
            <person name="Marques A.C."/>
            <person name="Graves T."/>
            <person name="Zhou S."/>
            <person name="Teague B."/>
            <person name="Potamousis K."/>
            <person name="Churas C."/>
            <person name="Place M."/>
            <person name="Herschleb J."/>
            <person name="Runnheim R."/>
            <person name="Forrest D."/>
            <person name="Amos-Landgraf J."/>
            <person name="Schwartz D.C."/>
            <person name="Cheng Z."/>
            <person name="Lindblad-Toh K."/>
            <person name="Eichler E.E."/>
            <person name="Ponting C.P."/>
        </authorList>
    </citation>
    <scope>NUCLEOTIDE SEQUENCE [LARGE SCALE GENOMIC DNA]</scope>
    <source>
        <strain>C57BL/6J</strain>
    </source>
</reference>
<reference key="2">
    <citation type="journal article" date="2004" name="Genome Res.">
        <title>The status, quality, and expansion of the NIH full-length cDNA project: the Mammalian Gene Collection (MGC).</title>
        <authorList>
            <consortium name="The MGC Project Team"/>
        </authorList>
    </citation>
    <scope>NUCLEOTIDE SEQUENCE [LARGE SCALE MRNA]</scope>
    <source>
        <tissue>Brain</tissue>
    </source>
</reference>
<reference key="3">
    <citation type="journal article" date="2005" name="Science">
        <title>The transcriptional landscape of the mammalian genome.</title>
        <authorList>
            <person name="Carninci P."/>
            <person name="Kasukawa T."/>
            <person name="Katayama S."/>
            <person name="Gough J."/>
            <person name="Frith M.C."/>
            <person name="Maeda N."/>
            <person name="Oyama R."/>
            <person name="Ravasi T."/>
            <person name="Lenhard B."/>
            <person name="Wells C."/>
            <person name="Kodzius R."/>
            <person name="Shimokawa K."/>
            <person name="Bajic V.B."/>
            <person name="Brenner S.E."/>
            <person name="Batalov S."/>
            <person name="Forrest A.R."/>
            <person name="Zavolan M."/>
            <person name="Davis M.J."/>
            <person name="Wilming L.G."/>
            <person name="Aidinis V."/>
            <person name="Allen J.E."/>
            <person name="Ambesi-Impiombato A."/>
            <person name="Apweiler R."/>
            <person name="Aturaliya R.N."/>
            <person name="Bailey T.L."/>
            <person name="Bansal M."/>
            <person name="Baxter L."/>
            <person name="Beisel K.W."/>
            <person name="Bersano T."/>
            <person name="Bono H."/>
            <person name="Chalk A.M."/>
            <person name="Chiu K.P."/>
            <person name="Choudhary V."/>
            <person name="Christoffels A."/>
            <person name="Clutterbuck D.R."/>
            <person name="Crowe M.L."/>
            <person name="Dalla E."/>
            <person name="Dalrymple B.P."/>
            <person name="de Bono B."/>
            <person name="Della Gatta G."/>
            <person name="di Bernardo D."/>
            <person name="Down T."/>
            <person name="Engstrom P."/>
            <person name="Fagiolini M."/>
            <person name="Faulkner G."/>
            <person name="Fletcher C.F."/>
            <person name="Fukushima T."/>
            <person name="Furuno M."/>
            <person name="Futaki S."/>
            <person name="Gariboldi M."/>
            <person name="Georgii-Hemming P."/>
            <person name="Gingeras T.R."/>
            <person name="Gojobori T."/>
            <person name="Green R.E."/>
            <person name="Gustincich S."/>
            <person name="Harbers M."/>
            <person name="Hayashi Y."/>
            <person name="Hensch T.K."/>
            <person name="Hirokawa N."/>
            <person name="Hill D."/>
            <person name="Huminiecki L."/>
            <person name="Iacono M."/>
            <person name="Ikeo K."/>
            <person name="Iwama A."/>
            <person name="Ishikawa T."/>
            <person name="Jakt M."/>
            <person name="Kanapin A."/>
            <person name="Katoh M."/>
            <person name="Kawasawa Y."/>
            <person name="Kelso J."/>
            <person name="Kitamura H."/>
            <person name="Kitano H."/>
            <person name="Kollias G."/>
            <person name="Krishnan S.P."/>
            <person name="Kruger A."/>
            <person name="Kummerfeld S.K."/>
            <person name="Kurochkin I.V."/>
            <person name="Lareau L.F."/>
            <person name="Lazarevic D."/>
            <person name="Lipovich L."/>
            <person name="Liu J."/>
            <person name="Liuni S."/>
            <person name="McWilliam S."/>
            <person name="Madan Babu M."/>
            <person name="Madera M."/>
            <person name="Marchionni L."/>
            <person name="Matsuda H."/>
            <person name="Matsuzawa S."/>
            <person name="Miki H."/>
            <person name="Mignone F."/>
            <person name="Miyake S."/>
            <person name="Morris K."/>
            <person name="Mottagui-Tabar S."/>
            <person name="Mulder N."/>
            <person name="Nakano N."/>
            <person name="Nakauchi H."/>
            <person name="Ng P."/>
            <person name="Nilsson R."/>
            <person name="Nishiguchi S."/>
            <person name="Nishikawa S."/>
            <person name="Nori F."/>
            <person name="Ohara O."/>
            <person name="Okazaki Y."/>
            <person name="Orlando V."/>
            <person name="Pang K.C."/>
            <person name="Pavan W.J."/>
            <person name="Pavesi G."/>
            <person name="Pesole G."/>
            <person name="Petrovsky N."/>
            <person name="Piazza S."/>
            <person name="Reed J."/>
            <person name="Reid J.F."/>
            <person name="Ring B.Z."/>
            <person name="Ringwald M."/>
            <person name="Rost B."/>
            <person name="Ruan Y."/>
            <person name="Salzberg S.L."/>
            <person name="Sandelin A."/>
            <person name="Schneider C."/>
            <person name="Schoenbach C."/>
            <person name="Sekiguchi K."/>
            <person name="Semple C.A."/>
            <person name="Seno S."/>
            <person name="Sessa L."/>
            <person name="Sheng Y."/>
            <person name="Shibata Y."/>
            <person name="Shimada H."/>
            <person name="Shimada K."/>
            <person name="Silva D."/>
            <person name="Sinclair B."/>
            <person name="Sperling S."/>
            <person name="Stupka E."/>
            <person name="Sugiura K."/>
            <person name="Sultana R."/>
            <person name="Takenaka Y."/>
            <person name="Taki K."/>
            <person name="Tammoja K."/>
            <person name="Tan S.L."/>
            <person name="Tang S."/>
            <person name="Taylor M.S."/>
            <person name="Tegner J."/>
            <person name="Teichmann S.A."/>
            <person name="Ueda H.R."/>
            <person name="van Nimwegen E."/>
            <person name="Verardo R."/>
            <person name="Wei C.L."/>
            <person name="Yagi K."/>
            <person name="Yamanishi H."/>
            <person name="Zabarovsky E."/>
            <person name="Zhu S."/>
            <person name="Zimmer A."/>
            <person name="Hide W."/>
            <person name="Bult C."/>
            <person name="Grimmond S.M."/>
            <person name="Teasdale R.D."/>
            <person name="Liu E.T."/>
            <person name="Brusic V."/>
            <person name="Quackenbush J."/>
            <person name="Wahlestedt C."/>
            <person name="Mattick J.S."/>
            <person name="Hume D.A."/>
            <person name="Kai C."/>
            <person name="Sasaki D."/>
            <person name="Tomaru Y."/>
            <person name="Fukuda S."/>
            <person name="Kanamori-Katayama M."/>
            <person name="Suzuki M."/>
            <person name="Aoki J."/>
            <person name="Arakawa T."/>
            <person name="Iida J."/>
            <person name="Imamura K."/>
            <person name="Itoh M."/>
            <person name="Kato T."/>
            <person name="Kawaji H."/>
            <person name="Kawagashira N."/>
            <person name="Kawashima T."/>
            <person name="Kojima M."/>
            <person name="Kondo S."/>
            <person name="Konno H."/>
            <person name="Nakano K."/>
            <person name="Ninomiya N."/>
            <person name="Nishio T."/>
            <person name="Okada M."/>
            <person name="Plessy C."/>
            <person name="Shibata K."/>
            <person name="Shiraki T."/>
            <person name="Suzuki S."/>
            <person name="Tagami M."/>
            <person name="Waki K."/>
            <person name="Watahiki A."/>
            <person name="Okamura-Oho Y."/>
            <person name="Suzuki H."/>
            <person name="Kawai J."/>
            <person name="Hayashizaki Y."/>
        </authorList>
    </citation>
    <scope>NUCLEOTIDE SEQUENCE [LARGE SCALE MRNA] OF 1-619</scope>
    <source>
        <tissue>Lung</tissue>
    </source>
</reference>
<reference key="4">
    <citation type="journal article" date="1998" name="FEBS Lett.">
        <title>Tyrosine phosphorylation of the TATA element modulatory factor by the FER nuclear tyrosine kinases.</title>
        <authorList>
            <person name="Schwartz Y."/>
            <person name="Ben-Dor I."/>
            <person name="Navon A."/>
            <person name="Motro B."/>
            <person name="Nir U."/>
        </authorList>
    </citation>
    <scope>PHOSPHORYLATION BY FER</scope>
</reference>
<reference key="5">
    <citation type="journal article" date="2004" name="Oncogene">
        <title>TMF/ARA160 is a BC-box-containing protein that mediates the degradation of Stat3.</title>
        <authorList>
            <person name="Perry E."/>
            <person name="Tsruya R."/>
            <person name="Levitsky P."/>
            <person name="Pomp O."/>
            <person name="Taller M."/>
            <person name="Weisberg S."/>
            <person name="Parris W."/>
            <person name="Kulkarni S."/>
            <person name="Malovani H."/>
            <person name="Pawson T."/>
            <person name="Shpungin S."/>
            <person name="Nir U."/>
        </authorList>
    </citation>
    <scope>FUNCTION</scope>
    <scope>SUBCELLULAR LOCATION</scope>
    <scope>INTERACTION WITH FER AND STAT3</scope>
</reference>
<reference key="6">
    <citation type="journal article" date="2006" name="DNA Cell Biol.">
        <title>TRNP: a conserved mammalian gene encoding a nuclear protein that accelerates cell-cycle progression.</title>
        <authorList>
            <person name="Volpe M."/>
            <person name="Shpungin S."/>
            <person name="Barbi C."/>
            <person name="Abrham G."/>
            <person name="Malovani H."/>
            <person name="Wides R."/>
            <person name="Nir U."/>
        </authorList>
    </citation>
    <scope>INTERACTION WITH TRNP1</scope>
</reference>
<reference key="7">
    <citation type="journal article" date="2007" name="Proc. Natl. Acad. Sci. U.S.A.">
        <title>Large-scale phosphorylation analysis of mouse liver.</title>
        <authorList>
            <person name="Villen J."/>
            <person name="Beausoleil S.A."/>
            <person name="Gerber S.A."/>
            <person name="Gygi S.P."/>
        </authorList>
    </citation>
    <scope>IDENTIFICATION BY MASS SPECTROMETRY [LARGE SCALE ANALYSIS]</scope>
    <source>
        <tissue>Liver</tissue>
    </source>
</reference>
<reference key="8">
    <citation type="journal article" date="2010" name="Cell">
        <title>A tissue-specific atlas of mouse protein phosphorylation and expression.</title>
        <authorList>
            <person name="Huttlin E.L."/>
            <person name="Jedrychowski M.P."/>
            <person name="Elias J.E."/>
            <person name="Goswami T."/>
            <person name="Rad R."/>
            <person name="Beausoleil S.A."/>
            <person name="Villen J."/>
            <person name="Haas W."/>
            <person name="Sowa M.E."/>
            <person name="Gygi S.P."/>
        </authorList>
    </citation>
    <scope>PHOSPHORYLATION [LARGE SCALE ANALYSIS] AT SER-324; SER-326; SER-329; SER-340; SER-357; SER-411; SER-926; THR-927 AND SER-931</scope>
    <scope>IDENTIFICATION BY MASS SPECTROMETRY [LARGE SCALE ANALYSIS]</scope>
    <source>
        <tissue>Brain</tissue>
        <tissue>Brown adipose tissue</tissue>
        <tissue>Heart</tissue>
        <tissue>Kidney</tissue>
        <tissue>Liver</tissue>
        <tissue>Lung</tissue>
        <tissue>Pancreas</tissue>
        <tissue>Spleen</tissue>
        <tissue>Testis</tissue>
    </source>
</reference>
<proteinExistence type="evidence at protein level"/>
<sequence length="1091" mass="121803">MSWFNASQLSSFAKQALSQAQKSIDRVLDIQEEEPSAWAEAIPYGEPGISPPVSGGWDTSTWGLNSTSSEPQSPPTASQAITKPVRRTVVDESENFFSAFLSPSDAHTIQKSPVVSKPPSKSQRPEEEVKSSLQESSSPGQSRVSETAEVRDSVCVSGETSAVGTPSPVPEDKHEETAGEESEVKVPTVRLKASENVVNVNTTEDVSTTSTQSLTAETKDMALEPKEQKHEDRQSNTPSPPVSSFSSGTSTTSDIEVLDHESVISESSASSRQETSDAKSSLHLMQTSFQLLSASACPEYSRLDDFQKLNESCCSSDAFERIDSFSVQSLDSRSVSEINSDDELPGKGYALVPIIVSPSTPKTKVVESTEENAEEEEGNETLVAPSEEAELEESGRSATPVNCDQPDILASPTAGSGGHSASGPATEQCEAVENQPKAPPEKEDVCKTVEFLNEKLEKRETQLLSLSKEKALLEEAYDNLKDEMFRVKEESSSISSLKDEFTQRIAEAEKKVQLACKERDAAKKEMKTIKEELATRLNSSQTADLLKEKDEQIQGLMEEGEKLSKQQLHNSNIIKKLRAKDKDNENVIAKLNRKAKELEEELQHLRQVLDGKEEVEKQHRENIKKLNSVVERQEKDLGRLQVDMDELEEKSRSTQAALDSAYRELTDLHKANAAKDSEVQEAALRREMKAKEELSGALEKAQEEARQQQEALVLQVGDLRLALQRAEQAAARKEDYLRHEISELQQRLQEAENRNQELSQSVSSTARPLLRQIENLQATLGSQTSSWETLEKSLSDRLGESQTLLAAAVERERAATEELLANKIQMSSVESQNTLLRQENSRLQAQLESEKNKLRKLEDENSRYQVELENLKDEYVRTLEESRKEKTLLSSQLEMERMKVEQERKKTIFTQEALKEKDHKLFSVCSTPTMSRSSSISGVDAAGLQASFLSQDESHDHSFGPMSTSASGSNLYEAVRMGAGSSIIENLQSQLKLREGEISHLQLEISNLEKTRSIMSEELVKLTNQNDELEEKVKEIPKLRVQLRDLDQRYNTILQMYGEKAEEAEELRLDLEDVKNMYKTQIDELLRQRLS</sequence>
<name>TMF1_MOUSE</name>
<evidence type="ECO:0000250" key="1"/>
<evidence type="ECO:0000250" key="2">
    <source>
        <dbReference type="UniProtKB" id="P82094"/>
    </source>
</evidence>
<evidence type="ECO:0000255" key="3"/>
<evidence type="ECO:0000256" key="4">
    <source>
        <dbReference type="SAM" id="MobiDB-lite"/>
    </source>
</evidence>
<evidence type="ECO:0000269" key="5">
    <source>
    </source>
</evidence>
<evidence type="ECO:0000269" key="6">
    <source>
    </source>
</evidence>
<evidence type="ECO:0000269" key="7">
    <source>
    </source>
</evidence>
<evidence type="ECO:0000305" key="8"/>
<evidence type="ECO:0007744" key="9">
    <source>
    </source>
</evidence>
<dbReference type="EMBL" id="AC155724">
    <property type="status" value="NOT_ANNOTATED_CDS"/>
    <property type="molecule type" value="Genomic_DNA"/>
</dbReference>
<dbReference type="EMBL" id="BC150931">
    <property type="protein sequence ID" value="AAI50932.1"/>
    <property type="molecule type" value="mRNA"/>
</dbReference>
<dbReference type="EMBL" id="AK144898">
    <property type="protein sequence ID" value="BAE26120.1"/>
    <property type="molecule type" value="mRNA"/>
</dbReference>
<dbReference type="EMBL" id="AK144729">
    <property type="protein sequence ID" value="BAE26035.1"/>
    <property type="status" value="ALT_FRAME"/>
    <property type="molecule type" value="mRNA"/>
</dbReference>
<dbReference type="CCDS" id="CCDS39575.1"/>
<dbReference type="RefSeq" id="NP_001074580.1">
    <property type="nucleotide sequence ID" value="NM_001081111.2"/>
</dbReference>
<dbReference type="SMR" id="B9EKI3"/>
<dbReference type="BioGRID" id="231235">
    <property type="interactions" value="9"/>
</dbReference>
<dbReference type="FunCoup" id="B9EKI3">
    <property type="interactions" value="3028"/>
</dbReference>
<dbReference type="IntAct" id="B9EKI3">
    <property type="interactions" value="1"/>
</dbReference>
<dbReference type="STRING" id="10090.ENSMUSP00000093325"/>
<dbReference type="GlyGen" id="B9EKI3">
    <property type="glycosylation" value="2 sites, 2 N-linked glycans (2 sites)"/>
</dbReference>
<dbReference type="iPTMnet" id="B9EKI3"/>
<dbReference type="PhosphoSitePlus" id="B9EKI3"/>
<dbReference type="SwissPalm" id="B9EKI3"/>
<dbReference type="jPOST" id="B9EKI3"/>
<dbReference type="PaxDb" id="10090-ENSMUSP00000093325"/>
<dbReference type="PeptideAtlas" id="B9EKI3"/>
<dbReference type="ProteomicsDB" id="259127"/>
<dbReference type="Pumba" id="B9EKI3"/>
<dbReference type="Antibodypedia" id="1796">
    <property type="antibodies" value="103 antibodies from 24 providers"/>
</dbReference>
<dbReference type="Ensembl" id="ENSMUST00000095664.6">
    <property type="protein sequence ID" value="ENSMUSP00000093325.4"/>
    <property type="gene ID" value="ENSMUSG00000030059.16"/>
</dbReference>
<dbReference type="GeneID" id="232286"/>
<dbReference type="KEGG" id="mmu:232286"/>
<dbReference type="UCSC" id="uc009dak.2">
    <property type="organism name" value="mouse"/>
</dbReference>
<dbReference type="AGR" id="MGI:2684999"/>
<dbReference type="CTD" id="7110"/>
<dbReference type="MGI" id="MGI:2684999">
    <property type="gene designation" value="Tmf1"/>
</dbReference>
<dbReference type="VEuPathDB" id="HostDB:ENSMUSG00000030059"/>
<dbReference type="eggNOG" id="KOG4673">
    <property type="taxonomic scope" value="Eukaryota"/>
</dbReference>
<dbReference type="GeneTree" id="ENSGT00390000010697"/>
<dbReference type="HOGENOM" id="CLU_009915_0_0_1"/>
<dbReference type="InParanoid" id="B9EKI3"/>
<dbReference type="OMA" id="EEMHGYI"/>
<dbReference type="OrthoDB" id="74178at2759"/>
<dbReference type="PhylomeDB" id="B9EKI3"/>
<dbReference type="TreeFam" id="TF329420"/>
<dbReference type="Reactome" id="R-MMU-6811440">
    <property type="pathway name" value="Retrograde transport at the Trans-Golgi-Network"/>
</dbReference>
<dbReference type="BioGRID-ORCS" id="232286">
    <property type="hits" value="3 hits in 78 CRISPR screens"/>
</dbReference>
<dbReference type="ChiTaRS" id="Tmf1">
    <property type="organism name" value="mouse"/>
</dbReference>
<dbReference type="PRO" id="PR:B9EKI3"/>
<dbReference type="Proteomes" id="UP000000589">
    <property type="component" value="Chromosome 6"/>
</dbReference>
<dbReference type="RNAct" id="B9EKI3">
    <property type="molecule type" value="protein"/>
</dbReference>
<dbReference type="Bgee" id="ENSMUSG00000030059">
    <property type="expression patterns" value="Expressed in spermatid and 230 other cell types or tissues"/>
</dbReference>
<dbReference type="ExpressionAtlas" id="B9EKI3">
    <property type="expression patterns" value="baseline and differential"/>
</dbReference>
<dbReference type="GO" id="GO:0005783">
    <property type="term" value="C:endoplasmic reticulum"/>
    <property type="evidence" value="ECO:0000314"/>
    <property type="project" value="MGI"/>
</dbReference>
<dbReference type="GO" id="GO:0005794">
    <property type="term" value="C:Golgi apparatus"/>
    <property type="evidence" value="ECO:0000314"/>
    <property type="project" value="MGI"/>
</dbReference>
<dbReference type="GO" id="GO:0000139">
    <property type="term" value="C:Golgi membrane"/>
    <property type="evidence" value="ECO:0007669"/>
    <property type="project" value="UniProtKB-SubCell"/>
</dbReference>
<dbReference type="GO" id="GO:0005634">
    <property type="term" value="C:nucleus"/>
    <property type="evidence" value="ECO:0007669"/>
    <property type="project" value="UniProtKB-SubCell"/>
</dbReference>
<dbReference type="GO" id="GO:0003677">
    <property type="term" value="F:DNA binding"/>
    <property type="evidence" value="ECO:0007669"/>
    <property type="project" value="UniProtKB-KW"/>
</dbReference>
<dbReference type="GO" id="GO:0050681">
    <property type="term" value="F:nuclear androgen receptor binding"/>
    <property type="evidence" value="ECO:0007669"/>
    <property type="project" value="Ensembl"/>
</dbReference>
<dbReference type="GO" id="GO:0003713">
    <property type="term" value="F:transcription coactivator activity"/>
    <property type="evidence" value="ECO:0007669"/>
    <property type="project" value="Ensembl"/>
</dbReference>
<dbReference type="GO" id="GO:0001675">
    <property type="term" value="P:acrosome assembly"/>
    <property type="evidence" value="ECO:0000315"/>
    <property type="project" value="MGI"/>
</dbReference>
<dbReference type="GO" id="GO:0030521">
    <property type="term" value="P:androgen receptor signaling pathway"/>
    <property type="evidence" value="ECO:0007669"/>
    <property type="project" value="Ensembl"/>
</dbReference>
<dbReference type="GO" id="GO:0006915">
    <property type="term" value="P:apoptotic process"/>
    <property type="evidence" value="ECO:0000315"/>
    <property type="project" value="MGI"/>
</dbReference>
<dbReference type="GO" id="GO:0042742">
    <property type="term" value="P:defense response to bacterium"/>
    <property type="evidence" value="ECO:0000315"/>
    <property type="project" value="MGI"/>
</dbReference>
<dbReference type="GO" id="GO:1904019">
    <property type="term" value="P:epithelial cell apoptotic process"/>
    <property type="evidence" value="ECO:0000315"/>
    <property type="project" value="MGI"/>
</dbReference>
<dbReference type="GO" id="GO:0030317">
    <property type="term" value="P:flagellated sperm motility"/>
    <property type="evidence" value="ECO:0000315"/>
    <property type="project" value="MGI"/>
</dbReference>
<dbReference type="GO" id="GO:0033327">
    <property type="term" value="P:Leydig cell differentiation"/>
    <property type="evidence" value="ECO:0000315"/>
    <property type="project" value="MGI"/>
</dbReference>
<dbReference type="GO" id="GO:0032275">
    <property type="term" value="P:luteinizing hormone secretion"/>
    <property type="evidence" value="ECO:0000315"/>
    <property type="project" value="MGI"/>
</dbReference>
<dbReference type="GO" id="GO:0008584">
    <property type="term" value="P:male gonad development"/>
    <property type="evidence" value="ECO:0000315"/>
    <property type="project" value="MGI"/>
</dbReference>
<dbReference type="GO" id="GO:1904036">
    <property type="term" value="P:negative regulation of epithelial cell apoptotic process"/>
    <property type="evidence" value="ECO:0000315"/>
    <property type="project" value="MGI"/>
</dbReference>
<dbReference type="GO" id="GO:0010629">
    <property type="term" value="P:negative regulation of gene expression"/>
    <property type="evidence" value="ECO:0000315"/>
    <property type="project" value="MGI"/>
</dbReference>
<dbReference type="GO" id="GO:0001819">
    <property type="term" value="P:positive regulation of cytokine production"/>
    <property type="evidence" value="ECO:0000315"/>
    <property type="project" value="MGI"/>
</dbReference>
<dbReference type="GO" id="GO:2000845">
    <property type="term" value="P:positive regulation of testosterone secretion"/>
    <property type="evidence" value="ECO:0000315"/>
    <property type="project" value="MGI"/>
</dbReference>
<dbReference type="GO" id="GO:0045944">
    <property type="term" value="P:positive regulation of transcription by RNA polymerase II"/>
    <property type="evidence" value="ECO:0007669"/>
    <property type="project" value="Ensembl"/>
</dbReference>
<dbReference type="GO" id="GO:0061136">
    <property type="term" value="P:regulation of proteasomal protein catabolic process"/>
    <property type="evidence" value="ECO:0000314"/>
    <property type="project" value="UniProtKB"/>
</dbReference>
<dbReference type="GO" id="GO:0007286">
    <property type="term" value="P:spermatid development"/>
    <property type="evidence" value="ECO:0000315"/>
    <property type="project" value="MGI"/>
</dbReference>
<dbReference type="GO" id="GO:0007289">
    <property type="term" value="P:spermatid nucleus differentiation"/>
    <property type="evidence" value="ECO:0000315"/>
    <property type="project" value="MGI"/>
</dbReference>
<dbReference type="InterPro" id="IPR052602">
    <property type="entry name" value="Growth_transcription_reg"/>
</dbReference>
<dbReference type="InterPro" id="IPR022092">
    <property type="entry name" value="TMF_DNA-bd"/>
</dbReference>
<dbReference type="InterPro" id="IPR022091">
    <property type="entry name" value="TMF_TATA-bd"/>
</dbReference>
<dbReference type="PANTHER" id="PTHR46515:SF1">
    <property type="entry name" value="TATA ELEMENT MODULATORY FACTOR"/>
    <property type="match status" value="1"/>
</dbReference>
<dbReference type="PANTHER" id="PTHR46515">
    <property type="entry name" value="TATA ELEMENT MODULATORY FACTOR TMF1"/>
    <property type="match status" value="1"/>
</dbReference>
<dbReference type="Pfam" id="PF12329">
    <property type="entry name" value="TMF_DNA_bd"/>
    <property type="match status" value="1"/>
</dbReference>
<dbReference type="Pfam" id="PF12325">
    <property type="entry name" value="TMF_TATA_bd"/>
    <property type="match status" value="1"/>
</dbReference>
<gene>
    <name type="primary">Tmf1</name>
    <name type="synonym">Ara160</name>
    <name type="synonym">Gm153</name>
</gene>
<feature type="chain" id="PRO_0000376797" description="TATA element modulatory factor">
    <location>
        <begin position="1"/>
        <end position="1091"/>
    </location>
</feature>
<feature type="region of interest" description="Disordered" evidence="4">
    <location>
        <begin position="42"/>
        <end position="86"/>
    </location>
</feature>
<feature type="region of interest" description="Disordered" evidence="4">
    <location>
        <begin position="100"/>
        <end position="280"/>
    </location>
</feature>
<feature type="region of interest" description="Interaction with Elongin BC complex" evidence="1">
    <location>
        <begin position="329"/>
        <end position="338"/>
    </location>
</feature>
<feature type="region of interest" description="Disordered" evidence="4">
    <location>
        <begin position="360"/>
        <end position="443"/>
    </location>
</feature>
<feature type="coiled-coil region" evidence="3">
    <location>
        <begin position="443"/>
        <end position="767"/>
    </location>
</feature>
<feature type="coiled-coil region" evidence="3">
    <location>
        <begin position="824"/>
        <end position="894"/>
    </location>
</feature>
<feature type="coiled-coil region" evidence="3">
    <location>
        <begin position="984"/>
        <end position="1090"/>
    </location>
</feature>
<feature type="compositionally biased region" description="Polar residues" evidence="4">
    <location>
        <begin position="57"/>
        <end position="81"/>
    </location>
</feature>
<feature type="compositionally biased region" description="Low complexity" evidence="4">
    <location>
        <begin position="111"/>
        <end position="122"/>
    </location>
</feature>
<feature type="compositionally biased region" description="Low complexity" evidence="4">
    <location>
        <begin position="131"/>
        <end position="142"/>
    </location>
</feature>
<feature type="compositionally biased region" description="Low complexity" evidence="4">
    <location>
        <begin position="194"/>
        <end position="211"/>
    </location>
</feature>
<feature type="compositionally biased region" description="Basic and acidic residues" evidence="4">
    <location>
        <begin position="217"/>
        <end position="234"/>
    </location>
</feature>
<feature type="compositionally biased region" description="Low complexity" evidence="4">
    <location>
        <begin position="242"/>
        <end position="253"/>
    </location>
</feature>
<feature type="compositionally biased region" description="Low complexity" evidence="4">
    <location>
        <begin position="264"/>
        <end position="273"/>
    </location>
</feature>
<feature type="compositionally biased region" description="Acidic residues" evidence="4">
    <location>
        <begin position="368"/>
        <end position="379"/>
    </location>
</feature>
<feature type="modified residue" description="Phosphoserine" evidence="2">
    <location>
        <position position="73"/>
    </location>
</feature>
<feature type="modified residue" description="Phosphoserine" evidence="2">
    <location>
        <position position="78"/>
    </location>
</feature>
<feature type="modified residue" description="Phosphoserine" evidence="2">
    <location>
        <position position="112"/>
    </location>
</feature>
<feature type="modified residue" description="Phosphoserine" evidence="2">
    <location>
        <position position="136"/>
    </location>
</feature>
<feature type="modified residue" description="Phosphoserine" evidence="2">
    <location>
        <position position="213"/>
    </location>
</feature>
<feature type="modified residue" description="Phosphoserine" evidence="9">
    <location>
        <position position="324"/>
    </location>
</feature>
<feature type="modified residue" description="Phosphoserine" evidence="9">
    <location>
        <position position="326"/>
    </location>
</feature>
<feature type="modified residue" description="Phosphoserine" evidence="9">
    <location>
        <position position="329"/>
    </location>
</feature>
<feature type="modified residue" description="Phosphoserine" evidence="2">
    <location>
        <position position="334"/>
    </location>
</feature>
<feature type="modified residue" description="Phosphoserine" evidence="9">
    <location>
        <position position="340"/>
    </location>
</feature>
<feature type="modified residue" description="Phosphoserine" evidence="9">
    <location>
        <position position="357"/>
    </location>
</feature>
<feature type="modified residue" description="Phosphoserine" evidence="9">
    <location>
        <position position="411"/>
    </location>
</feature>
<feature type="modified residue" description="Phosphoserine" evidence="2">
    <location>
        <position position="540"/>
    </location>
</feature>
<feature type="modified residue" description="Phosphoserine" evidence="2">
    <location>
        <position position="923"/>
    </location>
</feature>
<feature type="modified residue" description="Phosphoserine" evidence="9">
    <location>
        <position position="926"/>
    </location>
</feature>
<feature type="modified residue" description="Phosphothreonine" evidence="9">
    <location>
        <position position="927"/>
    </location>
</feature>
<feature type="modified residue" description="Phosphoserine" evidence="9">
    <location>
        <position position="931"/>
    </location>
</feature>
<feature type="sequence conflict" description="In Ref. 2; AAI50932." evidence="8" ref="2">
    <original>A</original>
    <variation>V</variation>
    <location>
        <position position="106"/>
    </location>
</feature>
<feature type="sequence conflict" description="In Ref. 2; AAI50932." evidence="8" ref="2">
    <original>V</original>
    <variation>A</variation>
    <location>
        <position position="144"/>
    </location>
</feature>
<feature type="sequence conflict" description="In Ref. 2; AAI50932." evidence="8" ref="2">
    <original>S</original>
    <variation>P</variation>
    <location>
        <position position="161"/>
    </location>
</feature>
<feature type="sequence conflict" description="In Ref. 2; AAI50932." evidence="8" ref="2">
    <original>T</original>
    <variation>S</variation>
    <location>
        <position position="203"/>
    </location>
</feature>
<feature type="sequence conflict" description="In Ref. 2; AAI50932." evidence="8" ref="2">
    <original>P</original>
    <variation>L</variation>
    <location>
        <position position="439"/>
    </location>
</feature>
<feature type="sequence conflict" description="In Ref. 2; AAI50932." evidence="8" ref="2">
    <original>L</original>
    <variation>I</variation>
    <location>
        <position position="871"/>
    </location>
</feature>
<comment type="function">
    <text evidence="1 5">Potential coactivator of the androgen receptor. May play critical roles in two RAB6-dependent retrograde transport processes: one from endosomes to the Golgi and the other from the Golgi to the ER (By similarity). Mediates STAT3 degradation.</text>
</comment>
<comment type="subunit">
    <text evidence="1 5 6">Component of the SNF/SWI transcription factor complexes (By similarity). Interacts with RAB6A. Interacts with TCEB1 (By similarity). Interacts with STAT3 and FER. Interacts with TRNP1; may regulate TRNP1 proteasomal degradation.</text>
</comment>
<comment type="subcellular location">
    <subcellularLocation>
        <location evidence="1">Cytoplasm</location>
    </subcellularLocation>
    <subcellularLocation>
        <location evidence="1">Nucleus</location>
    </subcellularLocation>
    <subcellularLocation>
        <location evidence="1">Golgi apparatus membrane</location>
    </subcellularLocation>
    <text evidence="1">Concentrated at the budding structures localized at the tips of cisternae.</text>
</comment>
<comment type="domain">
    <text>The Elongin BC complex binding domain is also known as BC-box with the consensus [APST]-L-x(3)-C-x(3)-[AILV].</text>
</comment>
<comment type="PTM">
    <text evidence="7">Phosphorylated by FER.</text>
</comment>
<comment type="sequence caution" evidence="8">
    <conflict type="frameshift">
        <sequence resource="EMBL-CDS" id="BAE26035"/>
    </conflict>
</comment>
<organism>
    <name type="scientific">Mus musculus</name>
    <name type="common">Mouse</name>
    <dbReference type="NCBI Taxonomy" id="10090"/>
    <lineage>
        <taxon>Eukaryota</taxon>
        <taxon>Metazoa</taxon>
        <taxon>Chordata</taxon>
        <taxon>Craniata</taxon>
        <taxon>Vertebrata</taxon>
        <taxon>Euteleostomi</taxon>
        <taxon>Mammalia</taxon>
        <taxon>Eutheria</taxon>
        <taxon>Euarchontoglires</taxon>
        <taxon>Glires</taxon>
        <taxon>Rodentia</taxon>
        <taxon>Myomorpha</taxon>
        <taxon>Muroidea</taxon>
        <taxon>Muridae</taxon>
        <taxon>Murinae</taxon>
        <taxon>Mus</taxon>
        <taxon>Mus</taxon>
    </lineage>
</organism>